<sequence>MNIHRECRSLLSLIQIVSGNLPTGGFSYSKGLESAIEYGWVKSLEDFLNWQKQWIHEQLIYIDWPMLKRCYYYTKINDSKNFKKCALQILSYRDTYELRLEEQRRGKAMEKLISQWYDPISDSWAVAFKCSGLASMAWLGYEWNIPIKNLALGYAYNALESSIMVGLKLLPFGQRTAQKLLRYLVEFLPNAWDKADLVKDHEVGGNFLLQSIASACHEDQYSRLFSS</sequence>
<keyword id="KW-0143">Chaperone</keyword>
<keyword id="KW-0963">Cytoplasm</keyword>
<keyword id="KW-0996">Nickel insertion</keyword>
<keyword id="KW-1185">Reference proteome</keyword>
<name>UREF_BLOFL</name>
<proteinExistence type="inferred from homology"/>
<evidence type="ECO:0000255" key="1">
    <source>
        <dbReference type="HAMAP-Rule" id="MF_01385"/>
    </source>
</evidence>
<reference key="1">
    <citation type="journal article" date="2003" name="Proc. Natl. Acad. Sci. U.S.A.">
        <title>The genome sequence of Blochmannia floridanus: comparative analysis of reduced genomes.</title>
        <authorList>
            <person name="Gil R."/>
            <person name="Silva F.J."/>
            <person name="Zientz E."/>
            <person name="Delmotte F."/>
            <person name="Gonzalez-Candelas F."/>
            <person name="Latorre A."/>
            <person name="Rausell C."/>
            <person name="Kamerbeek J."/>
            <person name="Gadau J."/>
            <person name="Hoelldobler B."/>
            <person name="van Ham R.C.H.J."/>
            <person name="Gross R."/>
            <person name="Moya A."/>
        </authorList>
    </citation>
    <scope>NUCLEOTIDE SEQUENCE [LARGE SCALE GENOMIC DNA]</scope>
</reference>
<accession>Q7VRS7</accession>
<dbReference type="EMBL" id="BX248583">
    <property type="protein sequence ID" value="CAD83208.1"/>
    <property type="molecule type" value="Genomic_DNA"/>
</dbReference>
<dbReference type="SMR" id="Q7VRS7"/>
<dbReference type="STRING" id="203907.Bfl522"/>
<dbReference type="KEGG" id="bfl:Bfl522"/>
<dbReference type="eggNOG" id="COG0830">
    <property type="taxonomic scope" value="Bacteria"/>
</dbReference>
<dbReference type="HOGENOM" id="CLU_049215_2_1_6"/>
<dbReference type="OrthoDB" id="9798772at2"/>
<dbReference type="Proteomes" id="UP000002192">
    <property type="component" value="Chromosome"/>
</dbReference>
<dbReference type="GO" id="GO:0005737">
    <property type="term" value="C:cytoplasm"/>
    <property type="evidence" value="ECO:0007669"/>
    <property type="project" value="UniProtKB-SubCell"/>
</dbReference>
<dbReference type="GO" id="GO:0016151">
    <property type="term" value="F:nickel cation binding"/>
    <property type="evidence" value="ECO:0007669"/>
    <property type="project" value="UniProtKB-UniRule"/>
</dbReference>
<dbReference type="Gene3D" id="1.10.4190.10">
    <property type="entry name" value="Urease accessory protein UreF"/>
    <property type="match status" value="1"/>
</dbReference>
<dbReference type="HAMAP" id="MF_01385">
    <property type="entry name" value="UreF"/>
    <property type="match status" value="1"/>
</dbReference>
<dbReference type="InterPro" id="IPR002639">
    <property type="entry name" value="UreF"/>
</dbReference>
<dbReference type="InterPro" id="IPR038277">
    <property type="entry name" value="UreF_sf"/>
</dbReference>
<dbReference type="PANTHER" id="PTHR33620">
    <property type="entry name" value="UREASE ACCESSORY PROTEIN F"/>
    <property type="match status" value="1"/>
</dbReference>
<dbReference type="PANTHER" id="PTHR33620:SF1">
    <property type="entry name" value="UREASE ACCESSORY PROTEIN F"/>
    <property type="match status" value="1"/>
</dbReference>
<dbReference type="Pfam" id="PF01730">
    <property type="entry name" value="UreF"/>
    <property type="match status" value="1"/>
</dbReference>
<dbReference type="PIRSF" id="PIRSF009467">
    <property type="entry name" value="Ureas_acces_UreF"/>
    <property type="match status" value="1"/>
</dbReference>
<feature type="chain" id="PRO_0000344076" description="Urease accessory protein UreF">
    <location>
        <begin position="1"/>
        <end position="227"/>
    </location>
</feature>
<organism>
    <name type="scientific">Blochmanniella floridana</name>
    <dbReference type="NCBI Taxonomy" id="203907"/>
    <lineage>
        <taxon>Bacteria</taxon>
        <taxon>Pseudomonadati</taxon>
        <taxon>Pseudomonadota</taxon>
        <taxon>Gammaproteobacteria</taxon>
        <taxon>Enterobacterales</taxon>
        <taxon>Enterobacteriaceae</taxon>
        <taxon>ant endosymbionts</taxon>
        <taxon>Candidatus Blochmanniella</taxon>
    </lineage>
</organism>
<comment type="function">
    <text evidence="1">Required for maturation of urease via the functional incorporation of the urease nickel metallocenter.</text>
</comment>
<comment type="subunit">
    <text evidence="1">UreD, UreF and UreG form a complex that acts as a GTP-hydrolysis-dependent molecular chaperone, activating the urease apoprotein by helping to assemble the nickel containing metallocenter of UreC. The UreE protein probably delivers the nickel.</text>
</comment>
<comment type="subcellular location">
    <subcellularLocation>
        <location evidence="1">Cytoplasm</location>
    </subcellularLocation>
</comment>
<comment type="similarity">
    <text evidence="1">Belongs to the UreF family.</text>
</comment>
<gene>
    <name evidence="1" type="primary">ureF</name>
    <name type="ordered locus">Bfl522</name>
</gene>
<protein>
    <recommendedName>
        <fullName evidence="1">Urease accessory protein UreF</fullName>
    </recommendedName>
</protein>